<feature type="chain" id="PRO_1000117719" description="tRNA uridine 5-carboxymethylaminomethyl modification enzyme MnmG">
    <location>
        <begin position="1"/>
        <end position="629"/>
    </location>
</feature>
<feature type="binding site" evidence="1">
    <location>
        <begin position="13"/>
        <end position="18"/>
    </location>
    <ligand>
        <name>FAD</name>
        <dbReference type="ChEBI" id="CHEBI:57692"/>
    </ligand>
</feature>
<feature type="binding site" evidence="1">
    <location>
        <position position="125"/>
    </location>
    <ligand>
        <name>FAD</name>
        <dbReference type="ChEBI" id="CHEBI:57692"/>
    </ligand>
</feature>
<feature type="binding site" evidence="1">
    <location>
        <position position="180"/>
    </location>
    <ligand>
        <name>FAD</name>
        <dbReference type="ChEBI" id="CHEBI:57692"/>
    </ligand>
</feature>
<feature type="binding site" evidence="1">
    <location>
        <begin position="273"/>
        <end position="287"/>
    </location>
    <ligand>
        <name>NAD(+)</name>
        <dbReference type="ChEBI" id="CHEBI:57540"/>
    </ligand>
</feature>
<feature type="binding site" evidence="1">
    <location>
        <position position="370"/>
    </location>
    <ligand>
        <name>FAD</name>
        <dbReference type="ChEBI" id="CHEBI:57692"/>
    </ligand>
</feature>
<reference key="1">
    <citation type="journal article" date="2009" name="PLoS Genet.">
        <title>Organised genome dynamics in the Escherichia coli species results in highly diverse adaptive paths.</title>
        <authorList>
            <person name="Touchon M."/>
            <person name="Hoede C."/>
            <person name="Tenaillon O."/>
            <person name="Barbe V."/>
            <person name="Baeriswyl S."/>
            <person name="Bidet P."/>
            <person name="Bingen E."/>
            <person name="Bonacorsi S."/>
            <person name="Bouchier C."/>
            <person name="Bouvet O."/>
            <person name="Calteau A."/>
            <person name="Chiapello H."/>
            <person name="Clermont O."/>
            <person name="Cruveiller S."/>
            <person name="Danchin A."/>
            <person name="Diard M."/>
            <person name="Dossat C."/>
            <person name="Karoui M.E."/>
            <person name="Frapy E."/>
            <person name="Garry L."/>
            <person name="Ghigo J.M."/>
            <person name="Gilles A.M."/>
            <person name="Johnson J."/>
            <person name="Le Bouguenec C."/>
            <person name="Lescat M."/>
            <person name="Mangenot S."/>
            <person name="Martinez-Jehanne V."/>
            <person name="Matic I."/>
            <person name="Nassif X."/>
            <person name="Oztas S."/>
            <person name="Petit M.A."/>
            <person name="Pichon C."/>
            <person name="Rouy Z."/>
            <person name="Ruf C.S."/>
            <person name="Schneider D."/>
            <person name="Tourret J."/>
            <person name="Vacherie B."/>
            <person name="Vallenet D."/>
            <person name="Medigue C."/>
            <person name="Rocha E.P.C."/>
            <person name="Denamur E."/>
        </authorList>
    </citation>
    <scope>NUCLEOTIDE SEQUENCE [LARGE SCALE GENOMIC DNA]</scope>
    <source>
        <strain>UMN026 / ExPEC</strain>
    </source>
</reference>
<keyword id="KW-0963">Cytoplasm</keyword>
<keyword id="KW-0274">FAD</keyword>
<keyword id="KW-0285">Flavoprotein</keyword>
<keyword id="KW-0520">NAD</keyword>
<keyword id="KW-0819">tRNA processing</keyword>
<evidence type="ECO:0000255" key="1">
    <source>
        <dbReference type="HAMAP-Rule" id="MF_00129"/>
    </source>
</evidence>
<proteinExistence type="inferred from homology"/>
<accession>B7NF57</accession>
<gene>
    <name evidence="1" type="primary">mnmG</name>
    <name evidence="1" type="synonym">gidA</name>
    <name type="ordered locus">ECUMN_4271</name>
</gene>
<protein>
    <recommendedName>
        <fullName evidence="1">tRNA uridine 5-carboxymethylaminomethyl modification enzyme MnmG</fullName>
    </recommendedName>
    <alternativeName>
        <fullName evidence="1">Glucose-inhibited division protein A</fullName>
    </alternativeName>
</protein>
<comment type="function">
    <text evidence="1">NAD-binding protein involved in the addition of a carboxymethylaminomethyl (cmnm) group at the wobble position (U34) of certain tRNAs, forming tRNA-cmnm(5)s(2)U34.</text>
</comment>
<comment type="cofactor">
    <cofactor evidence="1">
        <name>FAD</name>
        <dbReference type="ChEBI" id="CHEBI:57692"/>
    </cofactor>
</comment>
<comment type="subunit">
    <text evidence="1">Homodimer. Heterotetramer of two MnmE and two MnmG subunits.</text>
</comment>
<comment type="subcellular location">
    <subcellularLocation>
        <location evidence="1">Cytoplasm</location>
    </subcellularLocation>
</comment>
<comment type="similarity">
    <text evidence="1">Belongs to the MnmG family.</text>
</comment>
<name>MNMG_ECOLU</name>
<dbReference type="EMBL" id="CU928163">
    <property type="protein sequence ID" value="CAR15411.1"/>
    <property type="molecule type" value="Genomic_DNA"/>
</dbReference>
<dbReference type="RefSeq" id="WP_000499788.1">
    <property type="nucleotide sequence ID" value="NC_011751.1"/>
</dbReference>
<dbReference type="RefSeq" id="YP_002414906.1">
    <property type="nucleotide sequence ID" value="NC_011751.1"/>
</dbReference>
<dbReference type="SMR" id="B7NF57"/>
<dbReference type="STRING" id="585056.ECUMN_4271"/>
<dbReference type="GeneID" id="75205459"/>
<dbReference type="KEGG" id="eum:ECUMN_4271"/>
<dbReference type="PATRIC" id="fig|585056.7.peg.4443"/>
<dbReference type="HOGENOM" id="CLU_007831_2_2_6"/>
<dbReference type="Proteomes" id="UP000007097">
    <property type="component" value="Chromosome"/>
</dbReference>
<dbReference type="GO" id="GO:0005829">
    <property type="term" value="C:cytosol"/>
    <property type="evidence" value="ECO:0007669"/>
    <property type="project" value="TreeGrafter"/>
</dbReference>
<dbReference type="GO" id="GO:0050660">
    <property type="term" value="F:flavin adenine dinucleotide binding"/>
    <property type="evidence" value="ECO:0007669"/>
    <property type="project" value="UniProtKB-UniRule"/>
</dbReference>
<dbReference type="GO" id="GO:0030488">
    <property type="term" value="P:tRNA methylation"/>
    <property type="evidence" value="ECO:0007669"/>
    <property type="project" value="TreeGrafter"/>
</dbReference>
<dbReference type="GO" id="GO:0002098">
    <property type="term" value="P:tRNA wobble uridine modification"/>
    <property type="evidence" value="ECO:0007669"/>
    <property type="project" value="InterPro"/>
</dbReference>
<dbReference type="FunFam" id="1.10.10.1800:FF:000001">
    <property type="entry name" value="tRNA uridine 5-carboxymethylaminomethyl modification enzyme MnmG"/>
    <property type="match status" value="1"/>
</dbReference>
<dbReference type="FunFam" id="1.10.150.570:FF:000001">
    <property type="entry name" value="tRNA uridine 5-carboxymethylaminomethyl modification enzyme MnmG"/>
    <property type="match status" value="1"/>
</dbReference>
<dbReference type="FunFam" id="3.50.50.60:FF:000002">
    <property type="entry name" value="tRNA uridine 5-carboxymethylaminomethyl modification enzyme MnmG"/>
    <property type="match status" value="1"/>
</dbReference>
<dbReference type="FunFam" id="3.50.50.60:FF:000010">
    <property type="entry name" value="tRNA uridine 5-carboxymethylaminomethyl modification enzyme MnmG"/>
    <property type="match status" value="1"/>
</dbReference>
<dbReference type="Gene3D" id="3.50.50.60">
    <property type="entry name" value="FAD/NAD(P)-binding domain"/>
    <property type="match status" value="2"/>
</dbReference>
<dbReference type="Gene3D" id="1.10.150.570">
    <property type="entry name" value="GidA associated domain, C-terminal subdomain"/>
    <property type="match status" value="1"/>
</dbReference>
<dbReference type="Gene3D" id="1.10.10.1800">
    <property type="entry name" value="tRNA uridine 5-carboxymethylaminomethyl modification enzyme MnmG/GidA"/>
    <property type="match status" value="1"/>
</dbReference>
<dbReference type="HAMAP" id="MF_00129">
    <property type="entry name" value="MnmG_GidA"/>
    <property type="match status" value="1"/>
</dbReference>
<dbReference type="InterPro" id="IPR036188">
    <property type="entry name" value="FAD/NAD-bd_sf"/>
</dbReference>
<dbReference type="InterPro" id="IPR049312">
    <property type="entry name" value="GIDA_C_N"/>
</dbReference>
<dbReference type="InterPro" id="IPR004416">
    <property type="entry name" value="MnmG"/>
</dbReference>
<dbReference type="InterPro" id="IPR002218">
    <property type="entry name" value="MnmG-rel"/>
</dbReference>
<dbReference type="InterPro" id="IPR020595">
    <property type="entry name" value="MnmG-rel_CS"/>
</dbReference>
<dbReference type="InterPro" id="IPR026904">
    <property type="entry name" value="MnmG_C"/>
</dbReference>
<dbReference type="InterPro" id="IPR047001">
    <property type="entry name" value="MnmG_C_subdom"/>
</dbReference>
<dbReference type="InterPro" id="IPR044920">
    <property type="entry name" value="MnmG_C_subdom_sf"/>
</dbReference>
<dbReference type="InterPro" id="IPR040131">
    <property type="entry name" value="MnmG_N"/>
</dbReference>
<dbReference type="NCBIfam" id="TIGR00136">
    <property type="entry name" value="mnmG_gidA"/>
    <property type="match status" value="1"/>
</dbReference>
<dbReference type="PANTHER" id="PTHR11806">
    <property type="entry name" value="GLUCOSE INHIBITED DIVISION PROTEIN A"/>
    <property type="match status" value="1"/>
</dbReference>
<dbReference type="PANTHER" id="PTHR11806:SF0">
    <property type="entry name" value="PROTEIN MTO1 HOMOLOG, MITOCHONDRIAL"/>
    <property type="match status" value="1"/>
</dbReference>
<dbReference type="Pfam" id="PF01134">
    <property type="entry name" value="GIDA"/>
    <property type="match status" value="1"/>
</dbReference>
<dbReference type="Pfam" id="PF21680">
    <property type="entry name" value="GIDA_C_1st"/>
    <property type="match status" value="1"/>
</dbReference>
<dbReference type="Pfam" id="PF13932">
    <property type="entry name" value="SAM_GIDA_C"/>
    <property type="match status" value="1"/>
</dbReference>
<dbReference type="SMART" id="SM01228">
    <property type="entry name" value="GIDA_assoc_3"/>
    <property type="match status" value="1"/>
</dbReference>
<dbReference type="SUPFAM" id="SSF51905">
    <property type="entry name" value="FAD/NAD(P)-binding domain"/>
    <property type="match status" value="1"/>
</dbReference>
<dbReference type="PROSITE" id="PS01280">
    <property type="entry name" value="GIDA_1"/>
    <property type="match status" value="1"/>
</dbReference>
<dbReference type="PROSITE" id="PS01281">
    <property type="entry name" value="GIDA_2"/>
    <property type="match status" value="1"/>
</dbReference>
<organism>
    <name type="scientific">Escherichia coli O17:K52:H18 (strain UMN026 / ExPEC)</name>
    <dbReference type="NCBI Taxonomy" id="585056"/>
    <lineage>
        <taxon>Bacteria</taxon>
        <taxon>Pseudomonadati</taxon>
        <taxon>Pseudomonadota</taxon>
        <taxon>Gammaproteobacteria</taxon>
        <taxon>Enterobacterales</taxon>
        <taxon>Enterobacteriaceae</taxon>
        <taxon>Escherichia</taxon>
    </lineage>
</organism>
<sequence>MFYPDPFDVIIIGGGHAGTEAAMAAARMGQQTLLLTHNIDTLGQMSCNPAIGGIGKGHLVKEVDALGGLMAKAIDQAGIQFRILNASKGPAVRATRAQADRVLYRQAVRTALENQPNLMIFQQAVEDLIVENDRVVGAVTQMGLKFRAKAVVLTVGTFLDGKIHIGLDNYSGGRAGDPPSIPLSRRLRELPLRVGRLKTGTPPRIDARTIDFSVLAQQHGDNPMPVFSFMGNASQHPQQVPCYITHTNEKTHDVIRSNLDRSPMYAGVIEGVGPRYCPSIEDKVMRFADRNQHQIFLEPEGLTSNEIYPNGISTSLPFDVQMQIVRSMQGMENAKIVRPGYAIEYDFFDPRDLKPTLESKFIQGLFFAGQINGTTGYEEAAAQGLLAGLNAARLSADKEGWAPARSQAYLGVLVDDLCTLGTKEPYRMFTSRAEYRLMLREDNADLRLTEIGRELGLVDDERWARFNEKLENIERERQRLKSTWVTPSAEAAAEVNAHLTAPLSREASGEDLLRRPEMTYEKLTTLTPFAPALTDEQAAEQVEIQVKYEGYIARQQDEIEKQLRNENTLLPATLDYRQVSGLSNEVIAKLNDHKPASIGQASRISGVTPAAISILLVWLKKQGMLRRSA</sequence>